<accession>B5T072</accession>
<evidence type="ECO:0000269" key="1">
    <source>
    </source>
</evidence>
<evidence type="ECO:0000303" key="2">
    <source>
    </source>
</evidence>
<evidence type="ECO:0000303" key="3">
    <source>
    </source>
</evidence>
<evidence type="ECO:0000305" key="4"/>
<keyword id="KW-0328">Glycosyltransferase</keyword>
<keyword id="KW-0408">Iron</keyword>
<keyword id="KW-0448">Lipopolysaccharide biosynthesis</keyword>
<keyword id="KW-0460">Magnesium</keyword>
<keyword id="KW-0464">Manganese</keyword>
<keyword id="KW-0808">Transferase</keyword>
<feature type="chain" id="PRO_0000459429" description="UDP-Gal:alpha-D-GlcNAc-diphosphoundecaprenol alpha-1,3-galactosyltransferase">
    <location>
        <begin position="1"/>
        <end position="387"/>
    </location>
</feature>
<gene>
    <name evidence="2" type="primary">wclR</name>
</gene>
<organism>
    <name type="scientific">Escherichia coli</name>
    <dbReference type="NCBI Taxonomy" id="562"/>
    <lineage>
        <taxon>Bacteria</taxon>
        <taxon>Pseudomonadati</taxon>
        <taxon>Pseudomonadota</taxon>
        <taxon>Gammaproteobacteria</taxon>
        <taxon>Enterobacterales</taxon>
        <taxon>Enterobacteriaceae</taxon>
        <taxon>Escherichia</taxon>
    </lineage>
</organism>
<name>WCLR_ECOLX</name>
<dbReference type="EC" id="2.4.1.343" evidence="1"/>
<dbReference type="EMBL" id="EU694097">
    <property type="protein sequence ID" value="ACH97149.1"/>
    <property type="molecule type" value="Genomic_DNA"/>
</dbReference>
<dbReference type="RefSeq" id="WP_021562652.1">
    <property type="nucleotide sequence ID" value="NZ_WEPY01000001.1"/>
</dbReference>
<dbReference type="SMR" id="B5T072"/>
<dbReference type="CAZy" id="GT4">
    <property type="family name" value="Glycosyltransferase Family 4"/>
</dbReference>
<dbReference type="KEGG" id="ag:ACH97149"/>
<dbReference type="BioCyc" id="MetaCyc:MONOMER-20063"/>
<dbReference type="BRENDA" id="2.4.1.343">
    <property type="organism ID" value="2026"/>
</dbReference>
<dbReference type="BRENDA" id="2.4.1.87">
    <property type="organism ID" value="2026"/>
</dbReference>
<dbReference type="UniPathway" id="UPA00281"/>
<dbReference type="GO" id="GO:0016757">
    <property type="term" value="F:glycosyltransferase activity"/>
    <property type="evidence" value="ECO:0007669"/>
    <property type="project" value="UniProtKB-KW"/>
</dbReference>
<dbReference type="GO" id="GO:0009243">
    <property type="term" value="P:O antigen biosynthetic process"/>
    <property type="evidence" value="ECO:0007669"/>
    <property type="project" value="UniProtKB-UniPathway"/>
</dbReference>
<dbReference type="CDD" id="cd03808">
    <property type="entry name" value="GT4_CapM-like"/>
    <property type="match status" value="1"/>
</dbReference>
<dbReference type="Gene3D" id="3.40.50.2000">
    <property type="entry name" value="Glycogen Phosphorylase B"/>
    <property type="match status" value="2"/>
</dbReference>
<dbReference type="InterPro" id="IPR028098">
    <property type="entry name" value="Glyco_trans_4-like_N"/>
</dbReference>
<dbReference type="PANTHER" id="PTHR12526">
    <property type="entry name" value="GLYCOSYLTRANSFERASE"/>
    <property type="match status" value="1"/>
</dbReference>
<dbReference type="PANTHER" id="PTHR12526:SF630">
    <property type="entry name" value="GLYCOSYLTRANSFERASE"/>
    <property type="match status" value="1"/>
</dbReference>
<dbReference type="Pfam" id="PF13692">
    <property type="entry name" value="Glyco_trans_1_4"/>
    <property type="match status" value="1"/>
</dbReference>
<dbReference type="Pfam" id="PF13439">
    <property type="entry name" value="Glyco_transf_4"/>
    <property type="match status" value="1"/>
</dbReference>
<dbReference type="SUPFAM" id="SSF53756">
    <property type="entry name" value="UDP-Glycosyltransferase/glycogen phosphorylase"/>
    <property type="match status" value="1"/>
</dbReference>
<proteinExistence type="evidence at protein level"/>
<protein>
    <recommendedName>
        <fullName evidence="4">UDP-Gal:alpha-D-GlcNAc-diphosphoundecaprenol alpha-1,3-galactosyltransferase</fullName>
        <ecNumber evidence="1">2.4.1.343</ecNumber>
    </recommendedName>
    <alternativeName>
        <fullName evidence="3">Alpha-1,3-galactosyltransferase WclR</fullName>
        <shortName evidence="3">GalT</shortName>
    </alternativeName>
    <alternativeName>
        <fullName evidence="4">O-antigen biosynthesis galactosyltransferase WclR</fullName>
    </alternativeName>
</protein>
<comment type="function">
    <text evidence="1">Involved in the biosynthesis of the lipopolysaccharide (LPS) O-antigen region (PubMed:27196310). Catalyzes the transfer of galactose from UDP-galactose to GlcNAc-undecaprenyl diphosphate via an alpha1,3-linkage (PubMed:27196310). Has strict substrate specificity (PubMed:27196310).</text>
</comment>
<comment type="catalytic activity">
    <reaction evidence="1">
        <text>N-acetyl-alpha-D-glucosaminyl-di-trans,octa-cis-undecaprenyl diphosphate + UDP-alpha-D-galactose = alpha-D-Gal-(1-&gt;3)-alpha-D-GlcNAc-di-trans,octa-cis-undecaprenyl diphosphate + UDP + H(+)</text>
        <dbReference type="Rhea" id="RHEA:50620"/>
        <dbReference type="ChEBI" id="CHEBI:15378"/>
        <dbReference type="ChEBI" id="CHEBI:58223"/>
        <dbReference type="ChEBI" id="CHEBI:62959"/>
        <dbReference type="ChEBI" id="CHEBI:66914"/>
        <dbReference type="ChEBI" id="CHEBI:133491"/>
        <dbReference type="EC" id="2.4.1.343"/>
    </reaction>
    <physiologicalReaction direction="left-to-right" evidence="1">
        <dbReference type="Rhea" id="RHEA:50621"/>
    </physiologicalReaction>
</comment>
<comment type="cofactor">
    <cofactor evidence="1">
        <name>Mg(2+)</name>
        <dbReference type="ChEBI" id="CHEBI:18420"/>
    </cofactor>
    <cofactor evidence="1">
        <name>Mn(2+)</name>
        <dbReference type="ChEBI" id="CHEBI:29035"/>
    </cofactor>
    <cofactor evidence="1">
        <name>Fe(2+)</name>
        <dbReference type="ChEBI" id="CHEBI:29033"/>
    </cofactor>
</comment>
<comment type="pathway">
    <text evidence="1">Bacterial outer membrane biogenesis; LPS O-antigen biosynthesis.</text>
</comment>
<comment type="miscellaneous">
    <text evidence="1">Activity was assayed using the synthetic lipid carrier analog alpha-GlcNAc-diphospho-decane (GlcNAc-PP-De) as the acceptor.</text>
</comment>
<comment type="similarity">
    <text evidence="4">Belongs to the glycosyltransferase group 1 family. Glycosyltransferase 4 subfamily.</text>
</comment>
<reference key="1">
    <citation type="journal article" date="2008" name="J. Microbiol. Methods">
        <title>Characterization of Escherichia coli O3 and O21 O antigen gene clusters and development of serogroup-specific PCR assays.</title>
        <authorList>
            <person name="Ren Y."/>
            <person name="Liu B."/>
            <person name="Cheng J."/>
            <person name="Liu F."/>
            <person name="Feng L."/>
            <person name="Wang L."/>
        </authorList>
    </citation>
    <scope>NUCLEOTIDE SEQUENCE [GENOMIC DNA]</scope>
    <source>
        <strain>O3 / EAEC</strain>
    </source>
</reference>
<reference key="2">
    <citation type="journal article" date="2016" name="Carbohydr. Res.">
        <title>Biochemical characterization of the novel alpha-1,3-galactosyltransferase WclR from Escherichia coli O3.</title>
        <authorList>
            <person name="Chen C."/>
            <person name="Liu B."/>
            <person name="Xu Y."/>
            <person name="Utkina N."/>
            <person name="Zhou D."/>
            <person name="Danilov L."/>
            <person name="Torgov V."/>
            <person name="Veselovsky V."/>
            <person name="Feng L."/>
        </authorList>
    </citation>
    <scope>FUNCTION</scope>
    <scope>CATALYTIC ACTIVITY</scope>
    <scope>COFACTOR</scope>
    <scope>PATHWAY</scope>
    <scope>IDENTIFICATION BY MASS SPECTROMETRY</scope>
    <source>
        <strain>O3 / EAEC</strain>
    </source>
</reference>
<sequence length="387" mass="43948">MKSTHSKIKIAHVQLMPLLSGVQRVSLQEFELLPNEQFDINLICKESGPLTDYLDDSVRAFFVPTLCRNISLIKDMKSLISLYKLLKKEKYDIVHTHSSKTGILGRIAARLAGVPCVVHTVHGFAFESTKRKSVKLVYKWLEIFAAKCTTRLICLHNEDKEICIKELYVDPMKISVIPNGVDLEKFAPAINKGDLKEKILGLKRNSFVFTMVGRLWPQKNPLYFAEAAKYIIENNLIPDSVFVIVGDGELMNDLKYNYQTDMNLKKRLLLLGWRNDIPNILKASDVFVLPSLWEGMPLAILEAQSTGLPCIVSNINGNNCLVKNEFDGFLIELNDIDSFINALVRVTDDKVLNIMSKNCRNKIVNGFNIVKRVDKIKDLYIDMVVNK</sequence>